<geneLocation type="cyanelle"/>
<name>RBCR_CYAPA</name>
<sequence>MKVEELPFSLEQLRILKAIATEGSFKKAAESLYMTQPAISLQIQTLEKKLNIALFDRSGRRALMTEAGHLLLRYGDCILALCEETCHALEDLRNLQGGTLVIGASQTTGTYLMPRLIGLFRQRYPQVTVKLHVHSTRRISWNIANGQVDLAVIGGEVPHELQESLTITPYAEDELVLILPKSHPFAKLESIQKEDLYRLKFIALDAQSAIRKVIDKVLAQNGIDSNLFRVEMELNSIESIKNAVQSGLGAAFVSVSAIAKELELGILHWCRIENITIKRMLSIITNPNRYHSQAARIFSEEILTMFSLQSPEVKKRALSIIQNT</sequence>
<gene>
    <name type="primary">rbcR</name>
    <name type="synonym">ycf30</name>
</gene>
<protein>
    <recommendedName>
        <fullName>Probable RuBisCO transcriptional regulator</fullName>
    </recommendedName>
</protein>
<proteinExistence type="inferred from homology"/>
<keyword id="KW-0194">Cyanelle</keyword>
<keyword id="KW-0238">DNA-binding</keyword>
<keyword id="KW-0934">Plastid</keyword>
<keyword id="KW-0804">Transcription</keyword>
<keyword id="KW-0805">Transcription regulation</keyword>
<organism>
    <name type="scientific">Cyanophora paradoxa</name>
    <dbReference type="NCBI Taxonomy" id="2762"/>
    <lineage>
        <taxon>Eukaryota</taxon>
        <taxon>Glaucocystophyceae</taxon>
        <taxon>Cyanophoraceae</taxon>
        <taxon>Cyanophora</taxon>
    </lineage>
</organism>
<dbReference type="EMBL" id="U30821">
    <property type="protein sequence ID" value="AAA81313.1"/>
    <property type="molecule type" value="Genomic_DNA"/>
</dbReference>
<dbReference type="PIR" id="T06970">
    <property type="entry name" value="T06970"/>
</dbReference>
<dbReference type="RefSeq" id="NP_043282.1">
    <property type="nucleotide sequence ID" value="NC_001675.1"/>
</dbReference>
<dbReference type="SMR" id="P48271"/>
<dbReference type="GeneID" id="801556"/>
<dbReference type="GO" id="GO:0009842">
    <property type="term" value="C:cyanelle"/>
    <property type="evidence" value="ECO:0007669"/>
    <property type="project" value="UniProtKB-SubCell"/>
</dbReference>
<dbReference type="GO" id="GO:0003700">
    <property type="term" value="F:DNA-binding transcription factor activity"/>
    <property type="evidence" value="ECO:0007669"/>
    <property type="project" value="InterPro"/>
</dbReference>
<dbReference type="GO" id="GO:0000976">
    <property type="term" value="F:transcription cis-regulatory region binding"/>
    <property type="evidence" value="ECO:0007669"/>
    <property type="project" value="TreeGrafter"/>
</dbReference>
<dbReference type="CDD" id="cd08420">
    <property type="entry name" value="PBP2_CysL_like"/>
    <property type="match status" value="1"/>
</dbReference>
<dbReference type="FunFam" id="1.10.10.10:FF:000001">
    <property type="entry name" value="LysR family transcriptional regulator"/>
    <property type="match status" value="1"/>
</dbReference>
<dbReference type="Gene3D" id="3.40.190.290">
    <property type="match status" value="1"/>
</dbReference>
<dbReference type="Gene3D" id="1.10.10.10">
    <property type="entry name" value="Winged helix-like DNA-binding domain superfamily/Winged helix DNA-binding domain"/>
    <property type="match status" value="1"/>
</dbReference>
<dbReference type="InterPro" id="IPR005119">
    <property type="entry name" value="LysR_subst-bd"/>
</dbReference>
<dbReference type="InterPro" id="IPR000847">
    <property type="entry name" value="Tscrpt_reg_HTH_LysR"/>
</dbReference>
<dbReference type="InterPro" id="IPR036388">
    <property type="entry name" value="WH-like_DNA-bd_sf"/>
</dbReference>
<dbReference type="InterPro" id="IPR036390">
    <property type="entry name" value="WH_DNA-bd_sf"/>
</dbReference>
<dbReference type="PANTHER" id="PTHR30126">
    <property type="entry name" value="HTH-TYPE TRANSCRIPTIONAL REGULATOR"/>
    <property type="match status" value="1"/>
</dbReference>
<dbReference type="PANTHER" id="PTHR30126:SF39">
    <property type="entry name" value="HTH-TYPE TRANSCRIPTIONAL REGULATOR CYSL"/>
    <property type="match status" value="1"/>
</dbReference>
<dbReference type="Pfam" id="PF00126">
    <property type="entry name" value="HTH_1"/>
    <property type="match status" value="1"/>
</dbReference>
<dbReference type="Pfam" id="PF03466">
    <property type="entry name" value="LysR_substrate"/>
    <property type="match status" value="1"/>
</dbReference>
<dbReference type="PRINTS" id="PR00039">
    <property type="entry name" value="HTHLYSR"/>
</dbReference>
<dbReference type="SUPFAM" id="SSF53850">
    <property type="entry name" value="Periplasmic binding protein-like II"/>
    <property type="match status" value="1"/>
</dbReference>
<dbReference type="SUPFAM" id="SSF46785">
    <property type="entry name" value="Winged helix' DNA-binding domain"/>
    <property type="match status" value="1"/>
</dbReference>
<dbReference type="PROSITE" id="PS50931">
    <property type="entry name" value="HTH_LYSR"/>
    <property type="match status" value="1"/>
</dbReference>
<comment type="function">
    <text evidence="1">Trans-acting transcriptional regulator of RuBisCO genes (rbcL and rbcS) expression.</text>
</comment>
<comment type="subcellular location">
    <subcellularLocation>
        <location>Plastid</location>
        <location>Cyanelle</location>
    </subcellularLocation>
</comment>
<comment type="similarity">
    <text evidence="3">Belongs to the LysR transcriptional regulatory family.</text>
</comment>
<reference key="1">
    <citation type="journal article" date="1995" name="Plant Mol. Biol. Rep.">
        <title>Nucleotide sequence of the cyanelle DNA from Cyanophora paradoxa.</title>
        <authorList>
            <person name="Stirewalt V.L."/>
            <person name="Michalowski C.B."/>
            <person name="Loeffelhardt W."/>
            <person name="Bohnert H.J."/>
            <person name="Bryant D.A."/>
        </authorList>
    </citation>
    <scope>NUCLEOTIDE SEQUENCE [LARGE SCALE GENOMIC DNA]</scope>
    <source>
        <strain>UTEX LB 555 / Pringsheim</strain>
    </source>
</reference>
<reference key="2">
    <citation type="book" date="1997" name="Eukaryotism and symbiosis">
        <title>The complete sequence of the cyanelle genome of Cyanophora paradoxa: the genetic complexity of a primitive plastid.</title>
        <editorList>
            <person name="Schenk H.E.A."/>
            <person name="Herrmann R."/>
            <person name="Jeon K.W."/>
            <person name="Mueller N.E."/>
            <person name="Schwemmler W."/>
        </editorList>
        <authorList>
            <person name="Loeffelhardt W."/>
            <person name="Stirewalt V.L."/>
            <person name="Michalowski C.B."/>
            <person name="Annarella M."/>
            <person name="Farley J.Y."/>
            <person name="Schluchter W.M."/>
            <person name="Chung S."/>
            <person name="Newmann-Spallart C."/>
            <person name="Steiner J.M."/>
            <person name="Jakowitsch J."/>
            <person name="Bohnert H.J."/>
            <person name="Bryant D.A."/>
        </authorList>
    </citation>
    <scope>NUCLEOTIDE SEQUENCE [LARGE SCALE GENOMIC DNA]</scope>
    <source>
        <strain>UTEX LB 555 / Pringsheim</strain>
    </source>
</reference>
<evidence type="ECO:0000250" key="1"/>
<evidence type="ECO:0000255" key="2">
    <source>
        <dbReference type="PROSITE-ProRule" id="PRU00253"/>
    </source>
</evidence>
<evidence type="ECO:0000305" key="3"/>
<feature type="chain" id="PRO_0000105769" description="Probable RuBisCO transcriptional regulator">
    <location>
        <begin position="1"/>
        <end position="324"/>
    </location>
</feature>
<feature type="domain" description="HTH lysR-type" evidence="2">
    <location>
        <begin position="8"/>
        <end position="65"/>
    </location>
</feature>
<feature type="DNA-binding region" description="H-T-H motif" evidence="2">
    <location>
        <begin position="25"/>
        <end position="44"/>
    </location>
</feature>
<accession>P48271</accession>